<dbReference type="EMBL" id="D30808">
    <property type="protein sequence ID" value="BAA06469.1"/>
    <property type="molecule type" value="Genomic_DNA"/>
</dbReference>
<dbReference type="EMBL" id="AL009126">
    <property type="protein sequence ID" value="CAB12042.2"/>
    <property type="molecule type" value="Genomic_DNA"/>
</dbReference>
<dbReference type="PIR" id="H69752">
    <property type="entry name" value="H69752"/>
</dbReference>
<dbReference type="RefSeq" id="NP_388130.2">
    <property type="nucleotide sequence ID" value="NC_000964.3"/>
</dbReference>
<dbReference type="RefSeq" id="WP_003234818.1">
    <property type="nucleotide sequence ID" value="NZ_OZ025638.1"/>
</dbReference>
<dbReference type="SMR" id="P42237"/>
<dbReference type="FunCoup" id="P42237">
    <property type="interactions" value="488"/>
</dbReference>
<dbReference type="STRING" id="224308.BSU02480"/>
<dbReference type="TCDB" id="2.A.1.14.1">
    <property type="family name" value="the major facilitator superfamily (mfs)"/>
</dbReference>
<dbReference type="PaxDb" id="224308-BSU02480"/>
<dbReference type="EnsemblBacteria" id="CAB12042">
    <property type="protein sequence ID" value="CAB12042"/>
    <property type="gene ID" value="BSU_02480"/>
</dbReference>
<dbReference type="GeneID" id="938413"/>
<dbReference type="KEGG" id="bsu:BSU02480"/>
<dbReference type="PATRIC" id="fig|224308.179.peg.255"/>
<dbReference type="eggNOG" id="COG2271">
    <property type="taxonomic scope" value="Bacteria"/>
</dbReference>
<dbReference type="InParanoid" id="P42237"/>
<dbReference type="OrthoDB" id="6360at2"/>
<dbReference type="PhylomeDB" id="P42237"/>
<dbReference type="BioCyc" id="BSUB:BSU02480-MONOMER"/>
<dbReference type="Proteomes" id="UP000001570">
    <property type="component" value="Chromosome"/>
</dbReference>
<dbReference type="GO" id="GO:0005886">
    <property type="term" value="C:plasma membrane"/>
    <property type="evidence" value="ECO:0007669"/>
    <property type="project" value="UniProtKB-SubCell"/>
</dbReference>
<dbReference type="GO" id="GO:0022857">
    <property type="term" value="F:transmembrane transporter activity"/>
    <property type="evidence" value="ECO:0007669"/>
    <property type="project" value="InterPro"/>
</dbReference>
<dbReference type="CDD" id="cd17319">
    <property type="entry name" value="MFS_ExuT_GudP_like"/>
    <property type="match status" value="1"/>
</dbReference>
<dbReference type="FunFam" id="1.20.1250.20:FF:000010">
    <property type="entry name" value="Probable glucarate transporter"/>
    <property type="match status" value="1"/>
</dbReference>
<dbReference type="Gene3D" id="1.20.1250.20">
    <property type="entry name" value="MFS general substrate transporter like domains"/>
    <property type="match status" value="2"/>
</dbReference>
<dbReference type="InterPro" id="IPR011701">
    <property type="entry name" value="MFS"/>
</dbReference>
<dbReference type="InterPro" id="IPR020846">
    <property type="entry name" value="MFS_dom"/>
</dbReference>
<dbReference type="InterPro" id="IPR050382">
    <property type="entry name" value="MFS_Na/Anion_cotransporter"/>
</dbReference>
<dbReference type="InterPro" id="IPR036259">
    <property type="entry name" value="MFS_trans_sf"/>
</dbReference>
<dbReference type="InterPro" id="IPR000849">
    <property type="entry name" value="Sugar_P_transporter"/>
</dbReference>
<dbReference type="NCBIfam" id="TIGR00893">
    <property type="entry name" value="2A0114"/>
    <property type="match status" value="1"/>
</dbReference>
<dbReference type="PANTHER" id="PTHR11662:SF399">
    <property type="entry name" value="FI19708P1-RELATED"/>
    <property type="match status" value="1"/>
</dbReference>
<dbReference type="PANTHER" id="PTHR11662">
    <property type="entry name" value="SOLUTE CARRIER FAMILY 17"/>
    <property type="match status" value="1"/>
</dbReference>
<dbReference type="Pfam" id="PF07690">
    <property type="entry name" value="MFS_1"/>
    <property type="match status" value="2"/>
</dbReference>
<dbReference type="PIRSF" id="PIRSF002808">
    <property type="entry name" value="Hexose_phosphate_transp"/>
    <property type="match status" value="1"/>
</dbReference>
<dbReference type="SUPFAM" id="SSF103473">
    <property type="entry name" value="MFS general substrate transporter"/>
    <property type="match status" value="1"/>
</dbReference>
<dbReference type="PROSITE" id="PS50850">
    <property type="entry name" value="MFS"/>
    <property type="match status" value="1"/>
</dbReference>
<feature type="chain" id="PRO_0000121384" description="Probable galactarate/D-glucarate transporter GudP">
    <location>
        <begin position="1"/>
        <end position="455"/>
    </location>
</feature>
<feature type="transmembrane region" description="Helical" evidence="1">
    <location>
        <begin position="19"/>
        <end position="39"/>
    </location>
</feature>
<feature type="transmembrane region" description="Helical" evidence="1">
    <location>
        <begin position="59"/>
        <end position="79"/>
    </location>
</feature>
<feature type="transmembrane region" description="Helical" evidence="1">
    <location>
        <begin position="87"/>
        <end position="107"/>
    </location>
</feature>
<feature type="transmembrane region" description="Helical" evidence="1">
    <location>
        <begin position="108"/>
        <end position="128"/>
    </location>
</feature>
<feature type="transmembrane region" description="Helical" evidence="1">
    <location>
        <begin position="153"/>
        <end position="173"/>
    </location>
</feature>
<feature type="transmembrane region" description="Helical" evidence="1">
    <location>
        <begin position="177"/>
        <end position="197"/>
    </location>
</feature>
<feature type="transmembrane region" description="Helical" evidence="1">
    <location>
        <begin position="253"/>
        <end position="273"/>
    </location>
</feature>
<feature type="transmembrane region" description="Helical" evidence="1">
    <location>
        <begin position="289"/>
        <end position="309"/>
    </location>
</feature>
<feature type="transmembrane region" description="Helical" evidence="1">
    <location>
        <begin position="320"/>
        <end position="340"/>
    </location>
</feature>
<feature type="transmembrane region" description="Helical" evidence="1">
    <location>
        <begin position="348"/>
        <end position="368"/>
    </location>
</feature>
<feature type="transmembrane region" description="Helical" evidence="1">
    <location>
        <begin position="386"/>
        <end position="406"/>
    </location>
</feature>
<feature type="transmembrane region" description="Helical" evidence="1">
    <location>
        <begin position="414"/>
        <end position="434"/>
    </location>
</feature>
<feature type="sequence conflict" description="In Ref. 1; BAA06469." evidence="4" ref="1">
    <original>S</original>
    <variation>P</variation>
    <location>
        <position position="167"/>
    </location>
</feature>
<reference key="1">
    <citation type="journal article" date="1995" name="Microbiology">
        <title>Determination of a 21548 bp nucleotide sequence around the 24 degrees region of the Bacillus subtilis chromosome.</title>
        <authorList>
            <person name="Ogawa K."/>
            <person name="Akagawa E."/>
            <person name="Nakamura K."/>
            <person name="Yamane K."/>
        </authorList>
    </citation>
    <scope>NUCLEOTIDE SEQUENCE [GENOMIC DNA]</scope>
    <source>
        <strain>168</strain>
    </source>
</reference>
<reference key="2">
    <citation type="journal article" date="1997" name="Nature">
        <title>The complete genome sequence of the Gram-positive bacterium Bacillus subtilis.</title>
        <authorList>
            <person name="Kunst F."/>
            <person name="Ogasawara N."/>
            <person name="Moszer I."/>
            <person name="Albertini A.M."/>
            <person name="Alloni G."/>
            <person name="Azevedo V."/>
            <person name="Bertero M.G."/>
            <person name="Bessieres P."/>
            <person name="Bolotin A."/>
            <person name="Borchert S."/>
            <person name="Borriss R."/>
            <person name="Boursier L."/>
            <person name="Brans A."/>
            <person name="Braun M."/>
            <person name="Brignell S.C."/>
            <person name="Bron S."/>
            <person name="Brouillet S."/>
            <person name="Bruschi C.V."/>
            <person name="Caldwell B."/>
            <person name="Capuano V."/>
            <person name="Carter N.M."/>
            <person name="Choi S.-K."/>
            <person name="Codani J.-J."/>
            <person name="Connerton I.F."/>
            <person name="Cummings N.J."/>
            <person name="Daniel R.A."/>
            <person name="Denizot F."/>
            <person name="Devine K.M."/>
            <person name="Duesterhoeft A."/>
            <person name="Ehrlich S.D."/>
            <person name="Emmerson P.T."/>
            <person name="Entian K.-D."/>
            <person name="Errington J."/>
            <person name="Fabret C."/>
            <person name="Ferrari E."/>
            <person name="Foulger D."/>
            <person name="Fritz C."/>
            <person name="Fujita M."/>
            <person name="Fujita Y."/>
            <person name="Fuma S."/>
            <person name="Galizzi A."/>
            <person name="Galleron N."/>
            <person name="Ghim S.-Y."/>
            <person name="Glaser P."/>
            <person name="Goffeau A."/>
            <person name="Golightly E.J."/>
            <person name="Grandi G."/>
            <person name="Guiseppi G."/>
            <person name="Guy B.J."/>
            <person name="Haga K."/>
            <person name="Haiech J."/>
            <person name="Harwood C.R."/>
            <person name="Henaut A."/>
            <person name="Hilbert H."/>
            <person name="Holsappel S."/>
            <person name="Hosono S."/>
            <person name="Hullo M.-F."/>
            <person name="Itaya M."/>
            <person name="Jones L.-M."/>
            <person name="Joris B."/>
            <person name="Karamata D."/>
            <person name="Kasahara Y."/>
            <person name="Klaerr-Blanchard M."/>
            <person name="Klein C."/>
            <person name="Kobayashi Y."/>
            <person name="Koetter P."/>
            <person name="Koningstein G."/>
            <person name="Krogh S."/>
            <person name="Kumano M."/>
            <person name="Kurita K."/>
            <person name="Lapidus A."/>
            <person name="Lardinois S."/>
            <person name="Lauber J."/>
            <person name="Lazarevic V."/>
            <person name="Lee S.-M."/>
            <person name="Levine A."/>
            <person name="Liu H."/>
            <person name="Masuda S."/>
            <person name="Mauel C."/>
            <person name="Medigue C."/>
            <person name="Medina N."/>
            <person name="Mellado R.P."/>
            <person name="Mizuno M."/>
            <person name="Moestl D."/>
            <person name="Nakai S."/>
            <person name="Noback M."/>
            <person name="Noone D."/>
            <person name="O'Reilly M."/>
            <person name="Ogawa K."/>
            <person name="Ogiwara A."/>
            <person name="Oudega B."/>
            <person name="Park S.-H."/>
            <person name="Parro V."/>
            <person name="Pohl T.M."/>
            <person name="Portetelle D."/>
            <person name="Porwollik S."/>
            <person name="Prescott A.M."/>
            <person name="Presecan E."/>
            <person name="Pujic P."/>
            <person name="Purnelle B."/>
            <person name="Rapoport G."/>
            <person name="Rey M."/>
            <person name="Reynolds S."/>
            <person name="Rieger M."/>
            <person name="Rivolta C."/>
            <person name="Rocha E."/>
            <person name="Roche B."/>
            <person name="Rose M."/>
            <person name="Sadaie Y."/>
            <person name="Sato T."/>
            <person name="Scanlan E."/>
            <person name="Schleich S."/>
            <person name="Schroeter R."/>
            <person name="Scoffone F."/>
            <person name="Sekiguchi J."/>
            <person name="Sekowska A."/>
            <person name="Seror S.J."/>
            <person name="Serror P."/>
            <person name="Shin B.-S."/>
            <person name="Soldo B."/>
            <person name="Sorokin A."/>
            <person name="Tacconi E."/>
            <person name="Takagi T."/>
            <person name="Takahashi H."/>
            <person name="Takemaru K."/>
            <person name="Takeuchi M."/>
            <person name="Tamakoshi A."/>
            <person name="Tanaka T."/>
            <person name="Terpstra P."/>
            <person name="Tognoni A."/>
            <person name="Tosato V."/>
            <person name="Uchiyama S."/>
            <person name="Vandenbol M."/>
            <person name="Vannier F."/>
            <person name="Vassarotti A."/>
            <person name="Viari A."/>
            <person name="Wambutt R."/>
            <person name="Wedler E."/>
            <person name="Wedler H."/>
            <person name="Weitzenegger T."/>
            <person name="Winters P."/>
            <person name="Wipat A."/>
            <person name="Yamamoto H."/>
            <person name="Yamane K."/>
            <person name="Yasumoto K."/>
            <person name="Yata K."/>
            <person name="Yoshida K."/>
            <person name="Yoshikawa H.-F."/>
            <person name="Zumstein E."/>
            <person name="Yoshikawa H."/>
            <person name="Danchin A."/>
        </authorList>
    </citation>
    <scope>NUCLEOTIDE SEQUENCE [LARGE SCALE GENOMIC DNA]</scope>
    <source>
        <strain>168</strain>
    </source>
</reference>
<reference key="3">
    <citation type="journal article" date="2009" name="Microbiology">
        <title>From a consortium sequence to a unified sequence: the Bacillus subtilis 168 reference genome a decade later.</title>
        <authorList>
            <person name="Barbe V."/>
            <person name="Cruveiller S."/>
            <person name="Kunst F."/>
            <person name="Lenoble P."/>
            <person name="Meurice G."/>
            <person name="Sekowska A."/>
            <person name="Vallenet D."/>
            <person name="Wang T."/>
            <person name="Moszer I."/>
            <person name="Medigue C."/>
            <person name="Danchin A."/>
        </authorList>
    </citation>
    <scope>SEQUENCE REVISION TO 167</scope>
</reference>
<reference key="4">
    <citation type="journal article" date="2002" name="FEMS Microbiol. Lett.">
        <title>Identification and characterization of the Bacillus subtilis D-glucarate/galactarate utilization operon ycbCDEFGHJ.</title>
        <authorList>
            <person name="Hosoya S."/>
            <person name="Yamane K."/>
            <person name="Takeuchi M."/>
            <person name="Sato T."/>
        </authorList>
    </citation>
    <scope>POSSIBLE FUNCTION</scope>
    <scope>INDUCTION</scope>
</reference>
<keyword id="KW-1003">Cell membrane</keyword>
<keyword id="KW-0472">Membrane</keyword>
<keyword id="KW-1185">Reference proteome</keyword>
<keyword id="KW-0812">Transmembrane</keyword>
<keyword id="KW-1133">Transmembrane helix</keyword>
<keyword id="KW-0813">Transport</keyword>
<name>GUDP_BACSU</name>
<comment type="function">
    <text evidence="5">Probably involved in the uptake of galactarate and/or D-glucarate.</text>
</comment>
<comment type="catalytic activity">
    <reaction evidence="5">
        <text>galactarate(in) + H(+)(in) = galactarate(out) + H(+)(out)</text>
        <dbReference type="Rhea" id="RHEA:28478"/>
        <dbReference type="ChEBI" id="CHEBI:15378"/>
        <dbReference type="ChEBI" id="CHEBI:16537"/>
    </reaction>
</comment>
<comment type="catalytic activity">
    <reaction evidence="5">
        <text>D-glucarate(in) + H(+)(in) = D-glucarate(out) + H(+)(out)</text>
        <dbReference type="Rhea" id="RHEA:28474"/>
        <dbReference type="ChEBI" id="CHEBI:15378"/>
        <dbReference type="ChEBI" id="CHEBI:30612"/>
    </reaction>
</comment>
<comment type="subcellular location">
    <subcellularLocation>
        <location evidence="4">Cell membrane</location>
        <topology evidence="1">Multi-pass membrane protein</topology>
    </subcellularLocation>
</comment>
<comment type="induction">
    <text evidence="2">Induced in the presence of D-glucarate or D-galactarate.</text>
</comment>
<comment type="similarity">
    <text evidence="4">Belongs to the major facilitator superfamily. Phthalate permease family.</text>
</comment>
<gene>
    <name evidence="3" type="primary">gudP</name>
    <name type="synonym">ycbE</name>
    <name type="ordered locus">BSU02480</name>
</gene>
<organism>
    <name type="scientific">Bacillus subtilis (strain 168)</name>
    <dbReference type="NCBI Taxonomy" id="224308"/>
    <lineage>
        <taxon>Bacteria</taxon>
        <taxon>Bacillati</taxon>
        <taxon>Bacillota</taxon>
        <taxon>Bacilli</taxon>
        <taxon>Bacillales</taxon>
        <taxon>Bacillaceae</taxon>
        <taxon>Bacillus</taxon>
    </lineage>
</organism>
<sequence>MKKDFASVTPAGKKTSVRWFIVFMLFLVTSINYADRATLSITGDSVQHDLGLDSVAMGYVFSAFGWAYVIGQLPGGWLLDRFGSKTIIALSIFFWSFFTLLQGAIGFFSAGTAIILLFALRFLVGLSEAPSFPGNGRVVASWFPSSERGTASAFFNSAQYFAIVIFSPLMGWLTHSFGWHSVFVVMGIAGILLAVIWLKTVYEPKKHPKVNEAELAYIEQGGGLISMDDSKSKQETESKWPYIKQLLTNRMLIGVYIAQYCITTLTYFFLTWFPVYLVQARGMSILEAGFVASLPALCGFAGGVLGGIVSDILLKKGRSLTFARKVPIIAGMLLSCSMIVCNYTDSAWLVVVIMSLAFFGKGFGALGWAVVSDTSPKECAGLSGGLFNTFGNIASITTPIIIGYIVNATGSFNGALVFVGANAIAAILSYLLLVGPIKRVVLKKQEQDPDQSLPV</sequence>
<proteinExistence type="evidence at transcript level"/>
<evidence type="ECO:0000255" key="1"/>
<evidence type="ECO:0000269" key="2">
    <source>
    </source>
</evidence>
<evidence type="ECO:0000303" key="3">
    <source>
    </source>
</evidence>
<evidence type="ECO:0000305" key="4"/>
<evidence type="ECO:0000305" key="5">
    <source>
    </source>
</evidence>
<accession>P42237</accession>
<protein>
    <recommendedName>
        <fullName evidence="4">Probable galactarate/D-glucarate transporter GudP</fullName>
    </recommendedName>
</protein>